<sequence>MGLPWYRVHTVVLNDPGRLLAVHIMHTALVAGWAGSMALYELAVFDPSDPVLDPMWRQGMFVIPFMTRLGITNSWGGWSITGGTVTNPGIWSYEGVAGSHILFSGLCFLAAIWHWVYWDLAIFSDERTGKPSLDLPKIFGIHLFLSGLACFGFGAFHVTGLYGPGIWVSDPYGLTGEVQPVNPAWGVEGFDPFVPGGIASHHIAAGTLGILAGLFHLSVRPPQRLYKGLRMGNIETVLSSSIAAVFFAAFVVAGTMWYGSATTPIELFGPTRYQWDQGYFQQEIYRRVGAGLAKNQSLSEAWSKIPEKLAFYDYIGNNPAKGGLFRAGSMDSGDGIAVGWLGHPIFRDKEGRELFVRRMPTFFETFPVVLVDGDGIVRADVPFRRAESKYSVEQVGVTVEFYGGELNGVSYSDPATVKKYARRAQLGEIFELDRATLKSDGVFRSSPRGWFTFGHASFALLFFFGHIWHGARTLFRDVFAGIDPDLDTQVEFGAFQKLGDPTTRRQAV</sequence>
<feature type="chain" id="PRO_0000359849" description="Photosystem II CP47 reaction center protein">
    <location>
        <begin position="1"/>
        <end position="508"/>
    </location>
</feature>
<feature type="transmembrane region" description="Helical" evidence="1">
    <location>
        <begin position="21"/>
        <end position="36"/>
    </location>
</feature>
<feature type="transmembrane region" description="Helical" evidence="1">
    <location>
        <begin position="101"/>
        <end position="115"/>
    </location>
</feature>
<feature type="transmembrane region" description="Helical" evidence="1">
    <location>
        <begin position="140"/>
        <end position="156"/>
    </location>
</feature>
<feature type="transmembrane region" description="Helical" evidence="1">
    <location>
        <begin position="203"/>
        <end position="218"/>
    </location>
</feature>
<feature type="transmembrane region" description="Helical" evidence="1">
    <location>
        <begin position="237"/>
        <end position="252"/>
    </location>
</feature>
<feature type="transmembrane region" description="Helical" evidence="1">
    <location>
        <begin position="457"/>
        <end position="472"/>
    </location>
</feature>
<proteinExistence type="inferred from homology"/>
<gene>
    <name evidence="1" type="primary">psbB</name>
</gene>
<dbReference type="EMBL" id="EU262891">
    <property type="protein sequence ID" value="ABX10147.1"/>
    <property type="molecule type" value="Genomic_DNA"/>
</dbReference>
<dbReference type="RefSeq" id="YP_001687477.1">
    <property type="nucleotide sequence ID" value="NC_010362.1"/>
</dbReference>
<dbReference type="SMR" id="B0Z5F4"/>
<dbReference type="GeneID" id="5955446"/>
<dbReference type="GO" id="GO:0009535">
    <property type="term" value="C:chloroplast thylakoid membrane"/>
    <property type="evidence" value="ECO:0007669"/>
    <property type="project" value="UniProtKB-SubCell"/>
</dbReference>
<dbReference type="GO" id="GO:0009523">
    <property type="term" value="C:photosystem II"/>
    <property type="evidence" value="ECO:0007669"/>
    <property type="project" value="UniProtKB-KW"/>
</dbReference>
<dbReference type="GO" id="GO:0016168">
    <property type="term" value="F:chlorophyll binding"/>
    <property type="evidence" value="ECO:0007669"/>
    <property type="project" value="UniProtKB-UniRule"/>
</dbReference>
<dbReference type="GO" id="GO:0045156">
    <property type="term" value="F:electron transporter, transferring electrons within the cyclic electron transport pathway of photosynthesis activity"/>
    <property type="evidence" value="ECO:0007669"/>
    <property type="project" value="InterPro"/>
</dbReference>
<dbReference type="GO" id="GO:0009772">
    <property type="term" value="P:photosynthetic electron transport in photosystem II"/>
    <property type="evidence" value="ECO:0007669"/>
    <property type="project" value="InterPro"/>
</dbReference>
<dbReference type="FunFam" id="3.10.680.10:FF:000001">
    <property type="entry name" value="Photosystem II CP47 reaction center protein"/>
    <property type="match status" value="1"/>
</dbReference>
<dbReference type="Gene3D" id="3.10.680.10">
    <property type="entry name" value="Photosystem II CP47 reaction center protein"/>
    <property type="match status" value="1"/>
</dbReference>
<dbReference type="HAMAP" id="MF_01495">
    <property type="entry name" value="PSII_PsbB_CP47"/>
    <property type="match status" value="1"/>
</dbReference>
<dbReference type="InterPro" id="IPR000932">
    <property type="entry name" value="PS_antenna-like"/>
</dbReference>
<dbReference type="InterPro" id="IPR036001">
    <property type="entry name" value="PS_II_antenna-like_sf"/>
</dbReference>
<dbReference type="InterPro" id="IPR017486">
    <property type="entry name" value="PSII_PsbB"/>
</dbReference>
<dbReference type="NCBIfam" id="TIGR03039">
    <property type="entry name" value="PS_II_CP47"/>
    <property type="match status" value="1"/>
</dbReference>
<dbReference type="PANTHER" id="PTHR33180">
    <property type="entry name" value="PHOTOSYSTEM II CP43 REACTION CENTER PROTEIN"/>
    <property type="match status" value="1"/>
</dbReference>
<dbReference type="PANTHER" id="PTHR33180:SF35">
    <property type="entry name" value="PHOTOSYSTEM II CP47 REACTION CENTER PROTEIN"/>
    <property type="match status" value="1"/>
</dbReference>
<dbReference type="Pfam" id="PF00421">
    <property type="entry name" value="PSII"/>
    <property type="match status" value="1"/>
</dbReference>
<dbReference type="SUPFAM" id="SSF161077">
    <property type="entry name" value="Photosystem II antenna protein-like"/>
    <property type="match status" value="1"/>
</dbReference>
<accession>B0Z5F4</accession>
<reference key="1">
    <citation type="journal article" date="2008" name="Nucleic Acids Res.">
        <title>The complete nucleotide sequences of the five genetically distinct plastid genomes of Oenothera, subsection Oenothera: I. Sequence evaluation and plastome evolution.</title>
        <authorList>
            <person name="Greiner S."/>
            <person name="Wang X."/>
            <person name="Rauwolf U."/>
            <person name="Silber M.V."/>
            <person name="Mayer K."/>
            <person name="Meurer J."/>
            <person name="Haberer G."/>
            <person name="Herrmann R.G."/>
        </authorList>
    </citation>
    <scope>NUCLEOTIDE SEQUENCE [LARGE SCALE GENOMIC DNA]</scope>
    <source>
        <strain>cv. Atrovirens</strain>
    </source>
</reference>
<keyword id="KW-0148">Chlorophyll</keyword>
<keyword id="KW-0150">Chloroplast</keyword>
<keyword id="KW-0157">Chromophore</keyword>
<keyword id="KW-0472">Membrane</keyword>
<keyword id="KW-0602">Photosynthesis</keyword>
<keyword id="KW-0604">Photosystem II</keyword>
<keyword id="KW-0934">Plastid</keyword>
<keyword id="KW-0793">Thylakoid</keyword>
<keyword id="KW-0812">Transmembrane</keyword>
<keyword id="KW-1133">Transmembrane helix</keyword>
<name>PSBB_OENPA</name>
<geneLocation type="chloroplast"/>
<evidence type="ECO:0000255" key="1">
    <source>
        <dbReference type="HAMAP-Rule" id="MF_01495"/>
    </source>
</evidence>
<protein>
    <recommendedName>
        <fullName evidence="1">Photosystem II CP47 reaction center protein</fullName>
    </recommendedName>
    <alternativeName>
        <fullName evidence="1">PSII 47 kDa protein</fullName>
    </alternativeName>
    <alternativeName>
        <fullName evidence="1">Protein CP-47</fullName>
    </alternativeName>
</protein>
<organism>
    <name type="scientific">Oenothera parviflora</name>
    <name type="common">Small-flowered evening primrose</name>
    <name type="synonym">Oenothera cruciata</name>
    <dbReference type="NCBI Taxonomy" id="482429"/>
    <lineage>
        <taxon>Eukaryota</taxon>
        <taxon>Viridiplantae</taxon>
        <taxon>Streptophyta</taxon>
        <taxon>Embryophyta</taxon>
        <taxon>Tracheophyta</taxon>
        <taxon>Spermatophyta</taxon>
        <taxon>Magnoliopsida</taxon>
        <taxon>eudicotyledons</taxon>
        <taxon>Gunneridae</taxon>
        <taxon>Pentapetalae</taxon>
        <taxon>rosids</taxon>
        <taxon>malvids</taxon>
        <taxon>Myrtales</taxon>
        <taxon>Onagraceae</taxon>
        <taxon>Onagroideae</taxon>
        <taxon>Onagreae</taxon>
        <taxon>Oenothera</taxon>
    </lineage>
</organism>
<comment type="function">
    <text evidence="1">One of the components of the core complex of photosystem II (PSII). It binds chlorophyll and helps catalyze the primary light-induced photochemical processes of PSII. PSII is a light-driven water:plastoquinone oxidoreductase, using light energy to abstract electrons from H(2)O, generating O(2) and a proton gradient subsequently used for ATP formation.</text>
</comment>
<comment type="cofactor">
    <text evidence="1">Binds multiple chlorophylls. PSII binds additional chlorophylls, carotenoids and specific lipids.</text>
</comment>
<comment type="subunit">
    <text evidence="1">PSII is composed of 1 copy each of membrane proteins PsbA, PsbB, PsbC, PsbD, PsbE, PsbF, PsbH, PsbI, PsbJ, PsbK, PsbL, PsbM, PsbT, PsbX, PsbY, PsbZ, Psb30/Ycf12, at least 3 peripheral proteins of the oxygen-evolving complex and a large number of cofactors. It forms dimeric complexes.</text>
</comment>
<comment type="subcellular location">
    <subcellularLocation>
        <location evidence="1">Plastid</location>
        <location evidence="1">Chloroplast thylakoid membrane</location>
        <topology evidence="1">Multi-pass membrane protein</topology>
    </subcellularLocation>
</comment>
<comment type="similarity">
    <text evidence="1">Belongs to the PsbB/PsbC family. PsbB subfamily.</text>
</comment>